<name>YL088_MIMIV</name>
<accession>Q5UPF8</accession>
<organism>
    <name type="scientific">Acanthamoeba polyphaga mimivirus</name>
    <name type="common">APMV</name>
    <dbReference type="NCBI Taxonomy" id="212035"/>
    <lineage>
        <taxon>Viruses</taxon>
        <taxon>Varidnaviria</taxon>
        <taxon>Bamfordvirae</taxon>
        <taxon>Nucleocytoviricota</taxon>
        <taxon>Megaviricetes</taxon>
        <taxon>Imitervirales</taxon>
        <taxon>Mimiviridae</taxon>
        <taxon>Megamimivirinae</taxon>
        <taxon>Mimivirus</taxon>
        <taxon>Mimivirus bradfordmassiliense</taxon>
    </lineage>
</organism>
<reference key="1">
    <citation type="journal article" date="2004" name="Science">
        <title>The 1.2-megabase genome sequence of Mimivirus.</title>
        <authorList>
            <person name="Raoult D."/>
            <person name="Audic S."/>
            <person name="Robert C."/>
            <person name="Abergel C."/>
            <person name="Renesto P."/>
            <person name="Ogata H."/>
            <person name="La Scola B."/>
            <person name="Susan M."/>
            <person name="Claverie J.-M."/>
        </authorList>
    </citation>
    <scope>NUCLEOTIDE SEQUENCE [LARGE SCALE GENOMIC DNA]</scope>
    <source>
        <strain>Rowbotham-Bradford</strain>
    </source>
</reference>
<organismHost>
    <name type="scientific">Acanthamoeba polyphaga</name>
    <name type="common">Amoeba</name>
    <dbReference type="NCBI Taxonomy" id="5757"/>
</organismHost>
<sequence>MATVGEYDVDGEFPCYTYEYSKGFTKLMYLIITEKNNPNGHKNIVSYLSDKKNVKSINQKNKKGYTALSIAVRNCGNWCSYKTVRILLEKGAKTNIKNNEGITPLIFASFNSRFCEGFNVINLLLKYGADINARDNNGYTALMNASSNSNSSSTYTTVKLLLDNDANIDDKDKNGLTCLMHACNNVTLKSSIGTIELLLYYGADINAVDNNGRTALMHACDNSNNIELIELLLNRGADIEAVDYKGLTCLMIASKYAGSINSVEVVEILINRGANIEARNEKLRTPLMYACKYSHNNTSVIKLLLDKGANIETTDLRNNTALILASTYSSSVEPIKLLLDKGANINHTNDEGCNALNLACINSSYNNNSEIVKLLIDRGSNINNMDSERTILTSTCEFIGKGSNIDTVKILLDNNADPNIPNTNGNTTLLYMCKKYIKDGPKKRDLNFNVIKLLLDYKANPNFINKKNENSLTRLSKYSDKVDIEIIKLLLDYGVDINSTNNYCNSALLLFCMDLQNSCTKISYNCKNIVKLLLEKGADVNIINSNGNTALSIICESDDNNLSDIIELLLAHNANPNTINKEEYTPLMHLIERFDYFLTNSKSIPQNIESDSDSDSMSGFESYRGFSQSSKSVNKYNLDKIEKNKNEPEINYRQKNLEMLLKHKTTKINFQNSSGITALLHECQVSDNIEPIKLLLDNGADPNIQDEKGETALHKAVRHTNKIDVIKLLMDYHANPYIFRNKGQDLLSYAFKKSSRRNFVNIAKNLINNPCHVLSDENRSQIFESKDKENIISIIKMLEYNAKIKAKFDVTIDLMPQIATQIIYNHKSLRARLLKLKWLYMCGDIDKIITLENFELFDYLCVENMYQLHDKIIGISDHI</sequence>
<dbReference type="EMBL" id="AY653733">
    <property type="protein sequence ID" value="AAV50363.1"/>
    <property type="molecule type" value="Genomic_DNA"/>
</dbReference>
<dbReference type="SMR" id="Q5UPF8"/>
<dbReference type="KEGG" id="vg:9924686"/>
<dbReference type="OrthoDB" id="2010at10239"/>
<dbReference type="Proteomes" id="UP000001134">
    <property type="component" value="Genome"/>
</dbReference>
<dbReference type="Gene3D" id="1.25.40.20">
    <property type="entry name" value="Ankyrin repeat-containing domain"/>
    <property type="match status" value="8"/>
</dbReference>
<dbReference type="InterPro" id="IPR002110">
    <property type="entry name" value="Ankyrin_rpt"/>
</dbReference>
<dbReference type="InterPro" id="IPR036770">
    <property type="entry name" value="Ankyrin_rpt-contain_sf"/>
</dbReference>
<dbReference type="PANTHER" id="PTHR24173">
    <property type="entry name" value="ANKYRIN REPEAT CONTAINING"/>
    <property type="match status" value="1"/>
</dbReference>
<dbReference type="PANTHER" id="PTHR24173:SF83">
    <property type="entry name" value="SOCS BOX DOMAIN-CONTAINING PROTEIN"/>
    <property type="match status" value="1"/>
</dbReference>
<dbReference type="Pfam" id="PF12796">
    <property type="entry name" value="Ank_2"/>
    <property type="match status" value="6"/>
</dbReference>
<dbReference type="SMART" id="SM00248">
    <property type="entry name" value="ANK"/>
    <property type="match status" value="18"/>
</dbReference>
<dbReference type="SUPFAM" id="SSF48403">
    <property type="entry name" value="Ankyrin repeat"/>
    <property type="match status" value="3"/>
</dbReference>
<dbReference type="PROSITE" id="PS50297">
    <property type="entry name" value="ANK_REP_REGION"/>
    <property type="match status" value="1"/>
</dbReference>
<dbReference type="PROSITE" id="PS50088">
    <property type="entry name" value="ANK_REPEAT"/>
    <property type="match status" value="12"/>
</dbReference>
<protein>
    <recommendedName>
        <fullName>Putative ankyrin repeat protein L88</fullName>
    </recommendedName>
</protein>
<proteinExistence type="predicted"/>
<feature type="chain" id="PRO_0000067149" description="Putative ankyrin repeat protein L88">
    <location>
        <begin position="1"/>
        <end position="879"/>
    </location>
</feature>
<feature type="repeat" description="ANK 1">
    <location>
        <begin position="22"/>
        <end position="62"/>
    </location>
</feature>
<feature type="repeat" description="ANK 2">
    <location>
        <begin position="63"/>
        <end position="96"/>
    </location>
</feature>
<feature type="repeat" description="ANK 3">
    <location>
        <begin position="100"/>
        <end position="133"/>
    </location>
</feature>
<feature type="repeat" description="ANK 4">
    <location>
        <begin position="137"/>
        <end position="170"/>
    </location>
</feature>
<feature type="repeat" description="ANK 5">
    <location>
        <begin position="174"/>
        <end position="207"/>
    </location>
</feature>
<feature type="repeat" description="ANK 6">
    <location>
        <begin position="211"/>
        <end position="241"/>
    </location>
</feature>
<feature type="repeat" description="ANK 7">
    <location>
        <begin position="245"/>
        <end position="278"/>
    </location>
</feature>
<feature type="repeat" description="ANK 8">
    <location>
        <begin position="282"/>
        <end position="313"/>
    </location>
</feature>
<feature type="repeat" description="ANK 9">
    <location>
        <begin position="317"/>
        <end position="347"/>
    </location>
</feature>
<feature type="repeat" description="ANK 10">
    <location>
        <begin position="351"/>
        <end position="384"/>
    </location>
</feature>
<feature type="repeat" description="ANK 11">
    <location>
        <begin position="387"/>
        <end position="420"/>
    </location>
</feature>
<feature type="repeat" description="ANK 12">
    <location>
        <begin position="424"/>
        <end position="463"/>
    </location>
</feature>
<feature type="repeat" description="ANK 13">
    <location>
        <begin position="470"/>
        <end position="499"/>
    </location>
</feature>
<feature type="repeat" description="ANK 14">
    <location>
        <begin position="506"/>
        <end position="542"/>
    </location>
</feature>
<feature type="repeat" description="ANK 15">
    <location>
        <begin position="546"/>
        <end position="578"/>
    </location>
</feature>
<feature type="repeat" description="ANK 16">
    <location>
        <begin position="674"/>
        <end position="704"/>
    </location>
</feature>
<feature type="repeat" description="ANK 17">
    <location>
        <begin position="708"/>
        <end position="738"/>
    </location>
</feature>
<gene>
    <name type="ordered locus">MIMI_L88</name>
</gene>
<keyword id="KW-0040">ANK repeat</keyword>
<keyword id="KW-1185">Reference proteome</keyword>
<keyword id="KW-0677">Repeat</keyword>